<protein>
    <recommendedName>
        <fullName>Zinc finger CCHC domain-containing protein 14</fullName>
    </recommendedName>
    <alternativeName>
        <fullName>BDG-29</fullName>
    </alternativeName>
</protein>
<proteinExistence type="evidence at transcript level"/>
<sequence length="956" mass="99835">MASNHPAFSFHQKQVLRQELTQIQSSLNSGGGGGGGGGGGGKSAPGPSGALPTCSACHKMAPRTETPVSSISNSLENALHTSAHSTEESLPKRPLGKHGKVSVEKIDLKGLSHTKNDRSVECSFEVLWSDSSITSVTKSSSEVTEFISKLSQLCPEENLDKLIPCLAGPDSFYVERNHVDLEAGLRFLASAPSHTLKHDHVRKFFSSSSPSQQLQSPSPGNPSLPKVGAVMGVSGRPVCGVAGIPSSQSSAQHHLQHSASTSASLPHCSHTGGTGSALAYRTQVDNSPTILMPSSLQTPQPQEQNGILDWLRKLRLHKYYPVFKQLTMEKFLSLTEEDLNKFESLTMGAKKKLKTQLELEKEKSERRCLNSSAPSLVTSSGVARVTPTSHVGPVQPGRSSSHASELRVEVEPPAHQLPREGSSSEYSSSSSSPMGVQVREESSDSAEESDRRVDIHVEGTEKEKPVMLLAHFPSSSARPTAQVLPVQNETGSSPAAHHPLPPQLMPAASHLAPVRMLNSVHKSDRGGADVKLLSSSVHSLLSLEERNKGPGPRSGTKVDKSFGGAVLDPLPSAAPHPPGQGLSGLVENNAVSPTVSFGPRAKVVHAATLDRVLKTAQQPALTVESSSATTGTPSTVLHVARPPIKLLLASSVPADAAIAGQTSCPNNGQISVPPAIMNPRTALYTANTKVAFSAVSSVPVGPLQGSFCANSNTASPSSHPSTSFASMASLPSCPAPSSSPALSSVPESSFYSGGAGSSSPGNIPASSQSHHHHHHHQQPPAPPQPAPPPPGCIVCTSCGCSGSCGSNGLTVSYANYFQHPFSGPSVLTFPFLPFSPMCGNGYVSTQQYGGGSAFPVVHTPYNGSVTPDPVLGGQSTFAVPPMQNFMAGTAGVYQAQGLVGSTNGSSHKKSGNLSCYNCGATGHRAQDCKQPSMDFNRQGTFRLKYAPPAESLDSTD</sequence>
<name>ZCH14_MOUSE</name>
<comment type="alternative products">
    <event type="alternative splicing"/>
    <isoform>
        <id>Q8VIG0-1</id>
        <name>1</name>
        <sequence type="displayed"/>
    </isoform>
    <isoform>
        <id>Q8VIG0-2</id>
        <name>2</name>
        <sequence type="described" ref="VSP_013844"/>
    </isoform>
    <isoform>
        <id>Q8VIG0-3</id>
        <name>3</name>
        <sequence type="described" ref="VSP_013845"/>
    </isoform>
</comment>
<comment type="sequence caution" evidence="5">
    <conflict type="erroneous initiation">
        <sequence resource="EMBL-CDS" id="AAH09020"/>
    </conflict>
</comment>
<gene>
    <name type="primary">Zcchc14</name>
    <name type="synonym">Kiaa0579</name>
</gene>
<feature type="chain" id="PRO_0000150976" description="Zinc finger CCHC domain-containing protein 14">
    <location>
        <begin position="1"/>
        <end position="956"/>
    </location>
</feature>
<feature type="zinc finger region" description="CCHC-type" evidence="1">
    <location>
        <begin position="913"/>
        <end position="930"/>
    </location>
</feature>
<feature type="region of interest" description="Disordered" evidence="2">
    <location>
        <begin position="25"/>
        <end position="50"/>
    </location>
</feature>
<feature type="region of interest" description="Disordered" evidence="2">
    <location>
        <begin position="78"/>
        <end position="99"/>
    </location>
</feature>
<feature type="region of interest" description="Disordered" evidence="2">
    <location>
        <begin position="206"/>
        <end position="229"/>
    </location>
</feature>
<feature type="region of interest" description="Disordered" evidence="2">
    <location>
        <begin position="243"/>
        <end position="276"/>
    </location>
</feature>
<feature type="region of interest" description="Disordered" evidence="2">
    <location>
        <begin position="361"/>
        <end position="464"/>
    </location>
</feature>
<feature type="region of interest" description="Disordered" evidence="2">
    <location>
        <begin position="485"/>
        <end position="505"/>
    </location>
</feature>
<feature type="region of interest" description="Disordered" evidence="2">
    <location>
        <begin position="543"/>
        <end position="583"/>
    </location>
</feature>
<feature type="region of interest" description="Disordered" evidence="2">
    <location>
        <begin position="750"/>
        <end position="786"/>
    </location>
</feature>
<feature type="compositionally biased region" description="Gly residues" evidence="2">
    <location>
        <begin position="29"/>
        <end position="43"/>
    </location>
</feature>
<feature type="compositionally biased region" description="Low complexity" evidence="2">
    <location>
        <begin position="206"/>
        <end position="225"/>
    </location>
</feature>
<feature type="compositionally biased region" description="Low complexity" evidence="2">
    <location>
        <begin position="246"/>
        <end position="265"/>
    </location>
</feature>
<feature type="compositionally biased region" description="Polar residues" evidence="2">
    <location>
        <begin position="369"/>
        <end position="389"/>
    </location>
</feature>
<feature type="compositionally biased region" description="Low complexity" evidence="2">
    <location>
        <begin position="423"/>
        <end position="432"/>
    </location>
</feature>
<feature type="compositionally biased region" description="Basic and acidic residues" evidence="2">
    <location>
        <begin position="438"/>
        <end position="464"/>
    </location>
</feature>
<feature type="compositionally biased region" description="Low complexity" evidence="2">
    <location>
        <begin position="750"/>
        <end position="768"/>
    </location>
</feature>
<feature type="splice variant" id="VSP_013844" description="In isoform 2." evidence="4">
    <original>GTFRLKYAPPAESLDSTD</original>
    <variation>EHFIKP</variation>
    <location>
        <begin position="939"/>
        <end position="956"/>
    </location>
</feature>
<feature type="splice variant" id="VSP_013845" description="In isoform 3." evidence="3">
    <original>TFRLKYAPPAESLDSTD</original>
    <variation>KQVRGSHVLLALWLVAPERRKQETCFVLFFKMIFIHTVFFFFFFKIYLFIIICTYTEAVFRCTRRGCQTSSRVVVSHHVVAGI</variation>
    <location>
        <begin position="940"/>
        <end position="956"/>
    </location>
</feature>
<accession>Q8VIG0</accession>
<accession>Q80TX3</accession>
<accession>Q91VU4</accession>
<evidence type="ECO:0000255" key="1">
    <source>
        <dbReference type="PROSITE-ProRule" id="PRU00047"/>
    </source>
</evidence>
<evidence type="ECO:0000256" key="2">
    <source>
        <dbReference type="SAM" id="MobiDB-lite"/>
    </source>
</evidence>
<evidence type="ECO:0000303" key="3">
    <source>
    </source>
</evidence>
<evidence type="ECO:0000303" key="4">
    <source>
    </source>
</evidence>
<evidence type="ECO:0000305" key="5"/>
<keyword id="KW-0025">Alternative splicing</keyword>
<keyword id="KW-0479">Metal-binding</keyword>
<keyword id="KW-1185">Reference proteome</keyword>
<keyword id="KW-0862">Zinc</keyword>
<keyword id="KW-0863">Zinc-finger</keyword>
<organism>
    <name type="scientific">Mus musculus</name>
    <name type="common">Mouse</name>
    <dbReference type="NCBI Taxonomy" id="10090"/>
    <lineage>
        <taxon>Eukaryota</taxon>
        <taxon>Metazoa</taxon>
        <taxon>Chordata</taxon>
        <taxon>Craniata</taxon>
        <taxon>Vertebrata</taxon>
        <taxon>Euteleostomi</taxon>
        <taxon>Mammalia</taxon>
        <taxon>Eutheria</taxon>
        <taxon>Euarchontoglires</taxon>
        <taxon>Glires</taxon>
        <taxon>Rodentia</taxon>
        <taxon>Myomorpha</taxon>
        <taxon>Muroidea</taxon>
        <taxon>Muridae</taxon>
        <taxon>Murinae</taxon>
        <taxon>Mus</taxon>
        <taxon>Mus</taxon>
    </lineage>
</organism>
<dbReference type="EMBL" id="AB030244">
    <property type="protein sequence ID" value="BAB83130.1"/>
    <property type="molecule type" value="mRNA"/>
</dbReference>
<dbReference type="EMBL" id="BC009020">
    <property type="protein sequence ID" value="AAH09020.1"/>
    <property type="status" value="ALT_INIT"/>
    <property type="molecule type" value="mRNA"/>
</dbReference>
<dbReference type="EMBL" id="AK122315">
    <property type="protein sequence ID" value="BAC65597.1"/>
    <property type="molecule type" value="mRNA"/>
</dbReference>
<dbReference type="RefSeq" id="NP_543131.1">
    <property type="nucleotide sequence ID" value="NM_080855.2"/>
</dbReference>
<dbReference type="SMR" id="Q8VIG0"/>
<dbReference type="BioGRID" id="228335">
    <property type="interactions" value="1"/>
</dbReference>
<dbReference type="FunCoup" id="Q8VIG0">
    <property type="interactions" value="133"/>
</dbReference>
<dbReference type="STRING" id="10090.ENSMUSP00000040360"/>
<dbReference type="GlyGen" id="Q8VIG0">
    <property type="glycosylation" value="8 sites, 1 N-linked glycan (1 site), 1 O-linked glycan (5 sites)"/>
</dbReference>
<dbReference type="iPTMnet" id="Q8VIG0"/>
<dbReference type="PhosphoSitePlus" id="Q8VIG0"/>
<dbReference type="jPOST" id="Q8VIG0"/>
<dbReference type="PaxDb" id="10090-ENSMUSP00000040360"/>
<dbReference type="ProteomicsDB" id="298504">
    <molecule id="Q8VIG0-1"/>
</dbReference>
<dbReference type="ProteomicsDB" id="298505">
    <molecule id="Q8VIG0-2"/>
</dbReference>
<dbReference type="ProteomicsDB" id="298506">
    <molecule id="Q8VIG0-3"/>
</dbReference>
<dbReference type="Antibodypedia" id="2893">
    <property type="antibodies" value="68 antibodies from 17 providers"/>
</dbReference>
<dbReference type="DNASU" id="142682"/>
<dbReference type="GeneID" id="142682"/>
<dbReference type="KEGG" id="mmu:142682"/>
<dbReference type="UCSC" id="uc009nrx.2">
    <molecule id="Q8VIG0-1"/>
    <property type="organism name" value="mouse"/>
</dbReference>
<dbReference type="UCSC" id="uc009nry.1">
    <molecule id="Q8VIG0-2"/>
    <property type="organism name" value="mouse"/>
</dbReference>
<dbReference type="AGR" id="MGI:2159407"/>
<dbReference type="CTD" id="23174"/>
<dbReference type="MGI" id="MGI:2159407">
    <property type="gene designation" value="Zcchc14"/>
</dbReference>
<dbReference type="VEuPathDB" id="HostDB:ENSMUSG00000061410"/>
<dbReference type="eggNOG" id="KOG3791">
    <property type="taxonomic scope" value="Eukaryota"/>
</dbReference>
<dbReference type="eggNOG" id="KOG4400">
    <property type="taxonomic scope" value="Eukaryota"/>
</dbReference>
<dbReference type="HOGENOM" id="CLU_014508_0_0_1"/>
<dbReference type="InParanoid" id="Q8VIG0"/>
<dbReference type="OMA" id="NFGPRTK"/>
<dbReference type="OrthoDB" id="6361509at2759"/>
<dbReference type="PhylomeDB" id="Q8VIG0"/>
<dbReference type="TreeFam" id="TF335574"/>
<dbReference type="BioGRID-ORCS" id="142682">
    <property type="hits" value="15 hits in 77 CRISPR screens"/>
</dbReference>
<dbReference type="ChiTaRS" id="Zcchc14">
    <property type="organism name" value="mouse"/>
</dbReference>
<dbReference type="PRO" id="PR:Q8VIG0"/>
<dbReference type="Proteomes" id="UP000000589">
    <property type="component" value="Chromosome 8"/>
</dbReference>
<dbReference type="RNAct" id="Q8VIG0">
    <property type="molecule type" value="protein"/>
</dbReference>
<dbReference type="Bgee" id="ENSMUSG00000061410">
    <property type="expression patterns" value="Expressed in rostral migratory stream and 255 other cell types or tissues"/>
</dbReference>
<dbReference type="ExpressionAtlas" id="Q8VIG0">
    <property type="expression patterns" value="baseline and differential"/>
</dbReference>
<dbReference type="GO" id="GO:0003676">
    <property type="term" value="F:nucleic acid binding"/>
    <property type="evidence" value="ECO:0007669"/>
    <property type="project" value="InterPro"/>
</dbReference>
<dbReference type="GO" id="GO:0035091">
    <property type="term" value="F:phosphatidylinositol binding"/>
    <property type="evidence" value="ECO:0007669"/>
    <property type="project" value="InterPro"/>
</dbReference>
<dbReference type="GO" id="GO:0008270">
    <property type="term" value="F:zinc ion binding"/>
    <property type="evidence" value="ECO:0007669"/>
    <property type="project" value="UniProtKB-KW"/>
</dbReference>
<dbReference type="CDD" id="cd09558">
    <property type="entry name" value="SAM_ZCCH14"/>
    <property type="match status" value="1"/>
</dbReference>
<dbReference type="Gene3D" id="3.30.1520.10">
    <property type="entry name" value="Phox-like domain"/>
    <property type="match status" value="1"/>
</dbReference>
<dbReference type="Gene3D" id="1.10.150.50">
    <property type="entry name" value="Transcription Factor, Ets-1"/>
    <property type="match status" value="1"/>
</dbReference>
<dbReference type="Gene3D" id="4.10.60.10">
    <property type="entry name" value="Zinc finger, CCHC-type"/>
    <property type="match status" value="1"/>
</dbReference>
<dbReference type="InterPro" id="IPR036871">
    <property type="entry name" value="PX_dom_sf"/>
</dbReference>
<dbReference type="InterPro" id="IPR013761">
    <property type="entry name" value="SAM/pointed_sf"/>
</dbReference>
<dbReference type="InterPro" id="IPR037632">
    <property type="entry name" value="ZCCH14_SAM"/>
</dbReference>
<dbReference type="InterPro" id="IPR042344">
    <property type="entry name" value="ZCCHC14"/>
</dbReference>
<dbReference type="InterPro" id="IPR001878">
    <property type="entry name" value="Znf_CCHC"/>
</dbReference>
<dbReference type="InterPro" id="IPR036875">
    <property type="entry name" value="Znf_CCHC_sf"/>
</dbReference>
<dbReference type="PANTHER" id="PTHR16195">
    <property type="entry name" value="ZINC FINGER CCHC DOMAIN CONTAINING PROTEIN"/>
    <property type="match status" value="1"/>
</dbReference>
<dbReference type="PANTHER" id="PTHR16195:SF16">
    <property type="entry name" value="ZINC FINGER CCHC DOMAIN-CONTAINING PROTEIN 14"/>
    <property type="match status" value="1"/>
</dbReference>
<dbReference type="Pfam" id="PF00098">
    <property type="entry name" value="zf-CCHC"/>
    <property type="match status" value="1"/>
</dbReference>
<dbReference type="SMART" id="SM00343">
    <property type="entry name" value="ZnF_C2HC"/>
    <property type="match status" value="1"/>
</dbReference>
<dbReference type="SUPFAM" id="SSF64268">
    <property type="entry name" value="PX domain"/>
    <property type="match status" value="1"/>
</dbReference>
<dbReference type="SUPFAM" id="SSF57756">
    <property type="entry name" value="Retrovirus zinc finger-like domains"/>
    <property type="match status" value="1"/>
</dbReference>
<dbReference type="SUPFAM" id="SSF47769">
    <property type="entry name" value="SAM/Pointed domain"/>
    <property type="match status" value="1"/>
</dbReference>
<dbReference type="PROSITE" id="PS50158">
    <property type="entry name" value="ZF_CCHC"/>
    <property type="match status" value="1"/>
</dbReference>
<reference key="1">
    <citation type="submission" date="1999-07" db="EMBL/GenBank/DDBJ databases">
        <title>Isolation and characterization of a novel downstream gene of beta-catenin.</title>
        <authorList>
            <person name="Kawasoe T."/>
            <person name="Furukawa Y."/>
            <person name="Daigo Y."/>
            <person name="Ishiguro H."/>
            <person name="Nishiwaki T."/>
            <person name="Fujita M."/>
            <person name="Nagasawa Y."/>
            <person name="Miyoshi Y."/>
            <person name="Nakamura Y."/>
        </authorList>
    </citation>
    <scope>NUCLEOTIDE SEQUENCE [MRNA] (ISOFORM 1)</scope>
</reference>
<reference key="2">
    <citation type="journal article" date="2004" name="Genome Res.">
        <title>The status, quality, and expansion of the NIH full-length cDNA project: the Mammalian Gene Collection (MGC).</title>
        <authorList>
            <consortium name="The MGC Project Team"/>
        </authorList>
    </citation>
    <scope>NUCLEOTIDE SEQUENCE [LARGE SCALE MRNA] OF 704-944 (ISOFORM 2)</scope>
    <source>
        <strain>NMRI</strain>
        <tissue>Mammary gland</tissue>
    </source>
</reference>
<reference key="3">
    <citation type="journal article" date="2003" name="DNA Res.">
        <title>Prediction of the coding sequences of mouse homologues of KIAA gene: II. The complete nucleotide sequences of 400 mouse KIAA-homologous cDNAs identified by screening of terminal sequences of cDNA clones randomly sampled from size-fractionated libraries.</title>
        <authorList>
            <person name="Okazaki N."/>
            <person name="Kikuno R."/>
            <person name="Ohara R."/>
            <person name="Inamoto S."/>
            <person name="Aizawa H."/>
            <person name="Yuasa S."/>
            <person name="Nakajima D."/>
            <person name="Nagase T."/>
            <person name="Ohara O."/>
            <person name="Koga H."/>
        </authorList>
    </citation>
    <scope>NUCLEOTIDE SEQUENCE [LARGE SCALE MRNA] OF 790-956 (ISOFORM 3)</scope>
    <source>
        <tissue>Brain</tissue>
    </source>
</reference>